<feature type="chain" id="PRO_1000095129" description="Glutamyl-tRNA(Gln) amidotransferase subunit A">
    <location>
        <begin position="1"/>
        <end position="501"/>
    </location>
</feature>
<feature type="active site" description="Charge relay system" evidence="1">
    <location>
        <position position="80"/>
    </location>
</feature>
<feature type="active site" description="Charge relay system" evidence="1">
    <location>
        <position position="155"/>
    </location>
</feature>
<feature type="active site" description="Acyl-ester intermediate" evidence="1">
    <location>
        <position position="179"/>
    </location>
</feature>
<name>GATA_CUPTR</name>
<protein>
    <recommendedName>
        <fullName evidence="1">Glutamyl-tRNA(Gln) amidotransferase subunit A</fullName>
        <shortName evidence="1">Glu-ADT subunit A</shortName>
        <ecNumber evidence="1">6.3.5.7</ecNumber>
    </recommendedName>
</protein>
<keyword id="KW-0067">ATP-binding</keyword>
<keyword id="KW-0436">Ligase</keyword>
<keyword id="KW-0547">Nucleotide-binding</keyword>
<keyword id="KW-0648">Protein biosynthesis</keyword>
<organism>
    <name type="scientific">Cupriavidus taiwanensis (strain DSM 17343 / BCRC 17206 / CCUG 44338 / CIP 107171 / LMG 19424 / R1)</name>
    <name type="common">Ralstonia taiwanensis (strain LMG 19424)</name>
    <dbReference type="NCBI Taxonomy" id="977880"/>
    <lineage>
        <taxon>Bacteria</taxon>
        <taxon>Pseudomonadati</taxon>
        <taxon>Pseudomonadota</taxon>
        <taxon>Betaproteobacteria</taxon>
        <taxon>Burkholderiales</taxon>
        <taxon>Burkholderiaceae</taxon>
        <taxon>Cupriavidus</taxon>
    </lineage>
</organism>
<comment type="function">
    <text evidence="1">Allows the formation of correctly charged Gln-tRNA(Gln) through the transamidation of misacylated Glu-tRNA(Gln) in organisms which lack glutaminyl-tRNA synthetase. The reaction takes place in the presence of glutamine and ATP through an activated gamma-phospho-Glu-tRNA(Gln).</text>
</comment>
<comment type="catalytic activity">
    <reaction evidence="1">
        <text>L-glutamyl-tRNA(Gln) + L-glutamine + ATP + H2O = L-glutaminyl-tRNA(Gln) + L-glutamate + ADP + phosphate + H(+)</text>
        <dbReference type="Rhea" id="RHEA:17521"/>
        <dbReference type="Rhea" id="RHEA-COMP:9681"/>
        <dbReference type="Rhea" id="RHEA-COMP:9684"/>
        <dbReference type="ChEBI" id="CHEBI:15377"/>
        <dbReference type="ChEBI" id="CHEBI:15378"/>
        <dbReference type="ChEBI" id="CHEBI:29985"/>
        <dbReference type="ChEBI" id="CHEBI:30616"/>
        <dbReference type="ChEBI" id="CHEBI:43474"/>
        <dbReference type="ChEBI" id="CHEBI:58359"/>
        <dbReference type="ChEBI" id="CHEBI:78520"/>
        <dbReference type="ChEBI" id="CHEBI:78521"/>
        <dbReference type="ChEBI" id="CHEBI:456216"/>
        <dbReference type="EC" id="6.3.5.7"/>
    </reaction>
</comment>
<comment type="subunit">
    <text evidence="1">Heterotrimer of A, B and C subunits.</text>
</comment>
<comment type="similarity">
    <text evidence="1">Belongs to the amidase family. GatA subfamily.</text>
</comment>
<accession>B2AG25</accession>
<gene>
    <name evidence="1" type="primary">gatA</name>
    <name type="ordered locus">RALTA_A0051</name>
</gene>
<evidence type="ECO:0000255" key="1">
    <source>
        <dbReference type="HAMAP-Rule" id="MF_00120"/>
    </source>
</evidence>
<proteinExistence type="inferred from homology"/>
<sequence length="501" mass="53382">MPFSADSVTSLRQLADALAARTVSAEELAREYLARIEQAAALNAFIHVDAELTLAQARAADERRARGEAAPLTGVPVAHKDVFVTRGWRATAGSKMLGNYESPFDATVVERMAAAGMVTLGKTNMDEFAMGSSNENSHFGPVRNPWDAGRVPGGSSGGSAAAVAAGLAPAATGTDTGGSIRQPASFSGITGIKPTYGRVSRYGMIAFASSLDQGGPMAHTAEDCALLLNAMAGFDPKDSTSIPPAQGGVDEDYTRLLGQPRAGATAERPLAGLRIGLPREYFGKGLSADVEQAVRAALAEYEKLGATLVEVSLPKTELSIPVYYVIAPAEASSNLSRFDGVRYGHRAAEYRDLLDMYKKTRAEGFGAEVKRRILVGTYVLSHGYYDAYYLQAQKIRRIIADDFQRAFAQCDVIMGPVAPTVAWKLGEKTSDPVQMYLADIFTLSTSLAGLPGMSVPCGFGEGNMPVGLQLIGNYFDEARLLQAAHAFQQATDWHLRRPAKA</sequence>
<dbReference type="EC" id="6.3.5.7" evidence="1"/>
<dbReference type="EMBL" id="CU633749">
    <property type="protein sequence ID" value="CAP62724.1"/>
    <property type="molecule type" value="Genomic_DNA"/>
</dbReference>
<dbReference type="RefSeq" id="WP_012351394.1">
    <property type="nucleotide sequence ID" value="NC_010528.1"/>
</dbReference>
<dbReference type="SMR" id="B2AG25"/>
<dbReference type="GeneID" id="29761079"/>
<dbReference type="KEGG" id="cti:RALTA_A0051"/>
<dbReference type="eggNOG" id="COG0154">
    <property type="taxonomic scope" value="Bacteria"/>
</dbReference>
<dbReference type="HOGENOM" id="CLU_009600_0_3_4"/>
<dbReference type="BioCyc" id="CTAI977880:RALTA_RS00255-MONOMER"/>
<dbReference type="Proteomes" id="UP000001692">
    <property type="component" value="Chromosome 1"/>
</dbReference>
<dbReference type="GO" id="GO:0030956">
    <property type="term" value="C:glutamyl-tRNA(Gln) amidotransferase complex"/>
    <property type="evidence" value="ECO:0007669"/>
    <property type="project" value="InterPro"/>
</dbReference>
<dbReference type="GO" id="GO:0005524">
    <property type="term" value="F:ATP binding"/>
    <property type="evidence" value="ECO:0007669"/>
    <property type="project" value="UniProtKB-KW"/>
</dbReference>
<dbReference type="GO" id="GO:0050567">
    <property type="term" value="F:glutaminyl-tRNA synthase (glutamine-hydrolyzing) activity"/>
    <property type="evidence" value="ECO:0007669"/>
    <property type="project" value="UniProtKB-UniRule"/>
</dbReference>
<dbReference type="GO" id="GO:0006412">
    <property type="term" value="P:translation"/>
    <property type="evidence" value="ECO:0007669"/>
    <property type="project" value="UniProtKB-UniRule"/>
</dbReference>
<dbReference type="Gene3D" id="3.90.1300.10">
    <property type="entry name" value="Amidase signature (AS) domain"/>
    <property type="match status" value="1"/>
</dbReference>
<dbReference type="HAMAP" id="MF_00120">
    <property type="entry name" value="GatA"/>
    <property type="match status" value="1"/>
</dbReference>
<dbReference type="InterPro" id="IPR000120">
    <property type="entry name" value="Amidase"/>
</dbReference>
<dbReference type="InterPro" id="IPR020556">
    <property type="entry name" value="Amidase_CS"/>
</dbReference>
<dbReference type="InterPro" id="IPR023631">
    <property type="entry name" value="Amidase_dom"/>
</dbReference>
<dbReference type="InterPro" id="IPR036928">
    <property type="entry name" value="AS_sf"/>
</dbReference>
<dbReference type="InterPro" id="IPR004412">
    <property type="entry name" value="GatA"/>
</dbReference>
<dbReference type="InterPro" id="IPR006594">
    <property type="entry name" value="LisH"/>
</dbReference>
<dbReference type="NCBIfam" id="TIGR00132">
    <property type="entry name" value="gatA"/>
    <property type="match status" value="1"/>
</dbReference>
<dbReference type="PANTHER" id="PTHR11895:SF151">
    <property type="entry name" value="GLUTAMYL-TRNA(GLN) AMIDOTRANSFERASE SUBUNIT A"/>
    <property type="match status" value="1"/>
</dbReference>
<dbReference type="PANTHER" id="PTHR11895">
    <property type="entry name" value="TRANSAMIDASE"/>
    <property type="match status" value="1"/>
</dbReference>
<dbReference type="Pfam" id="PF01425">
    <property type="entry name" value="Amidase"/>
    <property type="match status" value="1"/>
</dbReference>
<dbReference type="SUPFAM" id="SSF75304">
    <property type="entry name" value="Amidase signature (AS) enzymes"/>
    <property type="match status" value="1"/>
</dbReference>
<dbReference type="PROSITE" id="PS00571">
    <property type="entry name" value="AMIDASES"/>
    <property type="match status" value="1"/>
</dbReference>
<reference key="1">
    <citation type="journal article" date="2008" name="Genome Res.">
        <title>Genome sequence of the beta-rhizobium Cupriavidus taiwanensis and comparative genomics of rhizobia.</title>
        <authorList>
            <person name="Amadou C."/>
            <person name="Pascal G."/>
            <person name="Mangenot S."/>
            <person name="Glew M."/>
            <person name="Bontemps C."/>
            <person name="Capela D."/>
            <person name="Carrere S."/>
            <person name="Cruveiller S."/>
            <person name="Dossat C."/>
            <person name="Lajus A."/>
            <person name="Marchetti M."/>
            <person name="Poinsot V."/>
            <person name="Rouy Z."/>
            <person name="Servin B."/>
            <person name="Saad M."/>
            <person name="Schenowitz C."/>
            <person name="Barbe V."/>
            <person name="Batut J."/>
            <person name="Medigue C."/>
            <person name="Masson-Boivin C."/>
        </authorList>
    </citation>
    <scope>NUCLEOTIDE SEQUENCE [LARGE SCALE GENOMIC DNA]</scope>
    <source>
        <strain>DSM 17343 / BCRC 17206 / CCUG 44338 / CIP 107171 / LMG 19424 / R1</strain>
    </source>
</reference>